<dbReference type="EMBL" id="AE016795">
    <property type="protein sequence ID" value="AAO09270.1"/>
    <property type="molecule type" value="Genomic_DNA"/>
</dbReference>
<dbReference type="RefSeq" id="WP_011078831.1">
    <property type="nucleotide sequence ID" value="NC_004459.3"/>
</dbReference>
<dbReference type="SMR" id="Q8DE39"/>
<dbReference type="KEGG" id="vvu:VV1_0762"/>
<dbReference type="HOGENOM" id="CLU_044142_4_1_6"/>
<dbReference type="Proteomes" id="UP000002275">
    <property type="component" value="Chromosome 1"/>
</dbReference>
<dbReference type="GO" id="GO:0022625">
    <property type="term" value="C:cytosolic large ribosomal subunit"/>
    <property type="evidence" value="ECO:0007669"/>
    <property type="project" value="TreeGrafter"/>
</dbReference>
<dbReference type="GO" id="GO:0019843">
    <property type="term" value="F:rRNA binding"/>
    <property type="evidence" value="ECO:0007669"/>
    <property type="project" value="UniProtKB-UniRule"/>
</dbReference>
<dbReference type="GO" id="GO:0003735">
    <property type="term" value="F:structural constituent of ribosome"/>
    <property type="evidence" value="ECO:0007669"/>
    <property type="project" value="InterPro"/>
</dbReference>
<dbReference type="GO" id="GO:0006412">
    <property type="term" value="P:translation"/>
    <property type="evidence" value="ECO:0007669"/>
    <property type="project" value="UniProtKB-UniRule"/>
</dbReference>
<dbReference type="FunFam" id="2.40.30.10:FF:000004">
    <property type="entry name" value="50S ribosomal protein L3"/>
    <property type="match status" value="1"/>
</dbReference>
<dbReference type="FunFam" id="3.30.160.810:FF:000001">
    <property type="entry name" value="50S ribosomal protein L3"/>
    <property type="match status" value="1"/>
</dbReference>
<dbReference type="Gene3D" id="3.30.160.810">
    <property type="match status" value="1"/>
</dbReference>
<dbReference type="Gene3D" id="2.40.30.10">
    <property type="entry name" value="Translation factors"/>
    <property type="match status" value="1"/>
</dbReference>
<dbReference type="HAMAP" id="MF_01325_B">
    <property type="entry name" value="Ribosomal_uL3_B"/>
    <property type="match status" value="1"/>
</dbReference>
<dbReference type="InterPro" id="IPR000597">
    <property type="entry name" value="Ribosomal_uL3"/>
</dbReference>
<dbReference type="InterPro" id="IPR019927">
    <property type="entry name" value="Ribosomal_uL3_bac/org-type"/>
</dbReference>
<dbReference type="InterPro" id="IPR019926">
    <property type="entry name" value="Ribosomal_uL3_CS"/>
</dbReference>
<dbReference type="InterPro" id="IPR009000">
    <property type="entry name" value="Transl_B-barrel_sf"/>
</dbReference>
<dbReference type="NCBIfam" id="TIGR03625">
    <property type="entry name" value="L3_bact"/>
    <property type="match status" value="1"/>
</dbReference>
<dbReference type="PANTHER" id="PTHR11229">
    <property type="entry name" value="50S RIBOSOMAL PROTEIN L3"/>
    <property type="match status" value="1"/>
</dbReference>
<dbReference type="PANTHER" id="PTHR11229:SF16">
    <property type="entry name" value="LARGE RIBOSOMAL SUBUNIT PROTEIN UL3C"/>
    <property type="match status" value="1"/>
</dbReference>
<dbReference type="Pfam" id="PF00297">
    <property type="entry name" value="Ribosomal_L3"/>
    <property type="match status" value="1"/>
</dbReference>
<dbReference type="SUPFAM" id="SSF50447">
    <property type="entry name" value="Translation proteins"/>
    <property type="match status" value="1"/>
</dbReference>
<dbReference type="PROSITE" id="PS00474">
    <property type="entry name" value="RIBOSOMAL_L3"/>
    <property type="match status" value="1"/>
</dbReference>
<sequence length="209" mass="22358">MIGLIGRKVGMTRVFTEEGVSIPVTVVEVEANRVAQVKTLETDGYAAIQVTAGTKKANRVNKAEAGHFAKAGVEAGRGLWEFRLENGEEFAVGSELTVELFNEVKKVDVTGTSKGKGFQGTVKRWNFRTQDMTHGNSLSHRAPGSIGQCQTPGRVFKGKKMAGHMGAERVTTQNLEIVRVDAERNLLLIKGAVPGATGGNVIVKPAVKA</sequence>
<evidence type="ECO:0000255" key="1">
    <source>
        <dbReference type="HAMAP-Rule" id="MF_01325"/>
    </source>
</evidence>
<evidence type="ECO:0000305" key="2"/>
<name>RL3_VIBVU</name>
<gene>
    <name evidence="1" type="primary">rplC</name>
    <name type="ordered locus">VV1_0762</name>
</gene>
<keyword id="KW-0488">Methylation</keyword>
<keyword id="KW-0687">Ribonucleoprotein</keyword>
<keyword id="KW-0689">Ribosomal protein</keyword>
<keyword id="KW-0694">RNA-binding</keyword>
<keyword id="KW-0699">rRNA-binding</keyword>
<accession>Q8DE39</accession>
<proteinExistence type="inferred from homology"/>
<reference key="1">
    <citation type="submission" date="2002-12" db="EMBL/GenBank/DDBJ databases">
        <title>Complete genome sequence of Vibrio vulnificus CMCP6.</title>
        <authorList>
            <person name="Rhee J.H."/>
            <person name="Kim S.Y."/>
            <person name="Chung S.S."/>
            <person name="Kim J.J."/>
            <person name="Moon Y.H."/>
            <person name="Jeong H."/>
            <person name="Choy H.E."/>
        </authorList>
    </citation>
    <scope>NUCLEOTIDE SEQUENCE [LARGE SCALE GENOMIC DNA]</scope>
    <source>
        <strain>CMCP6</strain>
    </source>
</reference>
<comment type="function">
    <text evidence="1">One of the primary rRNA binding proteins, it binds directly near the 3'-end of the 23S rRNA, where it nucleates assembly of the 50S subunit.</text>
</comment>
<comment type="subunit">
    <text evidence="1">Part of the 50S ribosomal subunit. Forms a cluster with proteins L14 and L19.</text>
</comment>
<comment type="PTM">
    <text evidence="1">Methylated by PrmB.</text>
</comment>
<comment type="similarity">
    <text evidence="1">Belongs to the universal ribosomal protein uL3 family.</text>
</comment>
<organism>
    <name type="scientific">Vibrio vulnificus (strain CMCP6)</name>
    <dbReference type="NCBI Taxonomy" id="216895"/>
    <lineage>
        <taxon>Bacteria</taxon>
        <taxon>Pseudomonadati</taxon>
        <taxon>Pseudomonadota</taxon>
        <taxon>Gammaproteobacteria</taxon>
        <taxon>Vibrionales</taxon>
        <taxon>Vibrionaceae</taxon>
        <taxon>Vibrio</taxon>
    </lineage>
</organism>
<feature type="chain" id="PRO_0000077188" description="Large ribosomal subunit protein uL3">
    <location>
        <begin position="1"/>
        <end position="209"/>
    </location>
</feature>
<feature type="modified residue" description="N5-methylglutamine" evidence="1">
    <location>
        <position position="150"/>
    </location>
</feature>
<protein>
    <recommendedName>
        <fullName evidence="1">Large ribosomal subunit protein uL3</fullName>
    </recommendedName>
    <alternativeName>
        <fullName evidence="2">50S ribosomal protein L3</fullName>
    </alternativeName>
</protein>